<feature type="chain" id="PRO_0000221057" description="Gamma-secretase subunit aph-1">
    <location>
        <begin position="1"/>
        <end position="308"/>
    </location>
</feature>
<feature type="transmembrane region" description="Helical; Name=1" evidence="1">
    <location>
        <begin position="5"/>
        <end position="25"/>
    </location>
</feature>
<feature type="transmembrane region" description="Helical; Name=2" evidence="1">
    <location>
        <begin position="32"/>
        <end position="52"/>
    </location>
</feature>
<feature type="transmembrane region" description="Helical; Name=3" evidence="1">
    <location>
        <begin position="53"/>
        <end position="73"/>
    </location>
</feature>
<feature type="transmembrane region" description="Helical; Name=4" evidence="1">
    <location>
        <begin position="122"/>
        <end position="142"/>
    </location>
</feature>
<feature type="transmembrane region" description="Helical; Name=5" evidence="1">
    <location>
        <begin position="170"/>
        <end position="190"/>
    </location>
</feature>
<feature type="transmembrane region" description="Helical; Name=6" evidence="1">
    <location>
        <begin position="200"/>
        <end position="220"/>
    </location>
</feature>
<feature type="transmembrane region" description="Helical; Name=7" evidence="1">
    <location>
        <begin position="230"/>
        <end position="250"/>
    </location>
</feature>
<feature type="region of interest" description="Disordered" evidence="2">
    <location>
        <begin position="286"/>
        <end position="308"/>
    </location>
</feature>
<feature type="mutagenesis site" description="In OR28; defects in localization of aph-2." evidence="3">
    <original>G</original>
    <variation>D</variation>
    <location>
        <position position="123"/>
    </location>
</feature>
<proteinExistence type="evidence at protein level"/>
<name>APH1_CAEEL</name>
<organism>
    <name type="scientific">Caenorhabditis elegans</name>
    <dbReference type="NCBI Taxonomy" id="6239"/>
    <lineage>
        <taxon>Eukaryota</taxon>
        <taxon>Metazoa</taxon>
        <taxon>Ecdysozoa</taxon>
        <taxon>Nematoda</taxon>
        <taxon>Chromadorea</taxon>
        <taxon>Rhabditida</taxon>
        <taxon>Rhabditina</taxon>
        <taxon>Rhabditomorpha</taxon>
        <taxon>Rhabditoidea</taxon>
        <taxon>Rhabditidae</taxon>
        <taxon>Peloderinae</taxon>
        <taxon>Caenorhabditis</taxon>
    </lineage>
</organism>
<evidence type="ECO:0000255" key="1"/>
<evidence type="ECO:0000256" key="2">
    <source>
        <dbReference type="SAM" id="MobiDB-lite"/>
    </source>
</evidence>
<evidence type="ECO:0000269" key="3">
    <source>
    </source>
</evidence>
<evidence type="ECO:0000269" key="4">
    <source>
    </source>
</evidence>
<evidence type="ECO:0000305" key="5"/>
<dbReference type="EMBL" id="AL021466">
    <property type="protein sequence ID" value="CAA16282.1"/>
    <property type="molecule type" value="Genomic_DNA"/>
</dbReference>
<dbReference type="PIR" id="T26007">
    <property type="entry name" value="T26007"/>
</dbReference>
<dbReference type="RefSeq" id="NP_492469.1">
    <property type="nucleotide sequence ID" value="NM_060068.7"/>
</dbReference>
<dbReference type="SMR" id="O45876"/>
<dbReference type="BioGRID" id="38178">
    <property type="interactions" value="4"/>
</dbReference>
<dbReference type="FunCoup" id="O45876">
    <property type="interactions" value="2027"/>
</dbReference>
<dbReference type="STRING" id="6239.VF36H2L.1.1"/>
<dbReference type="PaxDb" id="6239-VF36H2L.1"/>
<dbReference type="PeptideAtlas" id="O45876"/>
<dbReference type="EnsemblMetazoa" id="VF36H2L.1.1">
    <property type="protein sequence ID" value="VF36H2L.1.1"/>
    <property type="gene ID" value="WBGene00000147"/>
</dbReference>
<dbReference type="GeneID" id="172747"/>
<dbReference type="KEGG" id="cel:CELE_VF36H2L.1"/>
<dbReference type="UCSC" id="VF36H2L.1">
    <property type="organism name" value="c. elegans"/>
</dbReference>
<dbReference type="AGR" id="WB:WBGene00000147"/>
<dbReference type="CTD" id="33467"/>
<dbReference type="WormBase" id="VF36H2L.1">
    <property type="protein sequence ID" value="CE16526"/>
    <property type="gene ID" value="WBGene00000147"/>
    <property type="gene designation" value="aph-1"/>
</dbReference>
<dbReference type="eggNOG" id="KOG3972">
    <property type="taxonomic scope" value="Eukaryota"/>
</dbReference>
<dbReference type="GeneTree" id="ENSGT00390000002049"/>
<dbReference type="HOGENOM" id="CLU_842600_0_0_1"/>
<dbReference type="InParanoid" id="O45876"/>
<dbReference type="OMA" id="PTYIIMF"/>
<dbReference type="OrthoDB" id="6507463at2759"/>
<dbReference type="PhylomeDB" id="O45876"/>
<dbReference type="Reactome" id="R-CEL-1251985">
    <property type="pathway name" value="Nuclear signaling by ERBB4"/>
</dbReference>
<dbReference type="Reactome" id="R-CEL-3928665">
    <property type="pathway name" value="EPH-ephrin mediated repulsion of cells"/>
</dbReference>
<dbReference type="SignaLink" id="O45876"/>
<dbReference type="PRO" id="PR:O45876"/>
<dbReference type="Proteomes" id="UP000001940">
    <property type="component" value="Chromosome I"/>
</dbReference>
<dbReference type="Bgee" id="WBGene00000147">
    <property type="expression patterns" value="Expressed in pharyngeal muscle cell (C elegans) and 4 other cell types or tissues"/>
</dbReference>
<dbReference type="GO" id="GO:0005783">
    <property type="term" value="C:endoplasmic reticulum"/>
    <property type="evidence" value="ECO:0000318"/>
    <property type="project" value="GO_Central"/>
</dbReference>
<dbReference type="GO" id="GO:0070765">
    <property type="term" value="C:gamma-secretase complex"/>
    <property type="evidence" value="ECO:0000250"/>
    <property type="project" value="WormBase"/>
</dbReference>
<dbReference type="GO" id="GO:0030674">
    <property type="term" value="F:protein-macromolecule adaptor activity"/>
    <property type="evidence" value="ECO:0000318"/>
    <property type="project" value="GO_Central"/>
</dbReference>
<dbReference type="GO" id="GO:0045165">
    <property type="term" value="P:cell fate commitment"/>
    <property type="evidence" value="ECO:0000316"/>
    <property type="project" value="WormBase"/>
</dbReference>
<dbReference type="GO" id="GO:0060581">
    <property type="term" value="P:cell fate commitment involved in pattern specification"/>
    <property type="evidence" value="ECO:0000315"/>
    <property type="project" value="WormBase"/>
</dbReference>
<dbReference type="GO" id="GO:0009792">
    <property type="term" value="P:embryo development ending in birth or egg hatching"/>
    <property type="evidence" value="ECO:0000315"/>
    <property type="project" value="WormBase"/>
</dbReference>
<dbReference type="GO" id="GO:0048598">
    <property type="term" value="P:embryonic morphogenesis"/>
    <property type="evidence" value="ECO:0000315"/>
    <property type="project" value="WormBase"/>
</dbReference>
<dbReference type="GO" id="GO:0160094">
    <property type="term" value="P:nematode pharynx development"/>
    <property type="evidence" value="ECO:0000315"/>
    <property type="project" value="WormBase"/>
</dbReference>
<dbReference type="GO" id="GO:0007220">
    <property type="term" value="P:Notch receptor processing"/>
    <property type="evidence" value="ECO:0000318"/>
    <property type="project" value="GO_Central"/>
</dbReference>
<dbReference type="GO" id="GO:0007219">
    <property type="term" value="P:Notch signaling pathway"/>
    <property type="evidence" value="ECO:0000315"/>
    <property type="project" value="WormBase"/>
</dbReference>
<dbReference type="GO" id="GO:0048599">
    <property type="term" value="P:oocyte development"/>
    <property type="evidence" value="ECO:0000315"/>
    <property type="project" value="WormBase"/>
</dbReference>
<dbReference type="GO" id="GO:0034394">
    <property type="term" value="P:protein localization to cell surface"/>
    <property type="evidence" value="ECO:0000315"/>
    <property type="project" value="WormBase"/>
</dbReference>
<dbReference type="GO" id="GO:0016485">
    <property type="term" value="P:protein processing"/>
    <property type="evidence" value="ECO:0000318"/>
    <property type="project" value="GO_Central"/>
</dbReference>
<dbReference type="InterPro" id="IPR009294">
    <property type="entry name" value="Aph-1"/>
</dbReference>
<dbReference type="PANTHER" id="PTHR12889">
    <property type="entry name" value="GAMMA-SECRETASE SUBUNIT APH-1"/>
    <property type="match status" value="1"/>
</dbReference>
<dbReference type="Pfam" id="PF06105">
    <property type="entry name" value="Aph-1"/>
    <property type="match status" value="1"/>
</dbReference>
<reference key="1">
    <citation type="journal article" date="2002" name="Proc. Natl. Acad. Sci. U.S.A.">
        <title>APH-1 is a multipass membrane protein essential for the Notch signaling pathway in Caenorhabditis elegans embryos.</title>
        <authorList>
            <person name="Goutte C."/>
            <person name="Tsunozaki M."/>
            <person name="Hale V.A."/>
            <person name="Priess J.R."/>
        </authorList>
    </citation>
    <scope>NUCLEOTIDE SEQUENCE [GENOMIC DNA]</scope>
    <scope>FUNCTION</scope>
    <scope>MUTAGENESIS OF GLY-123</scope>
    <source>
        <strain>Bristol N2</strain>
        <tissue>Embryo</tissue>
    </source>
</reference>
<reference key="2">
    <citation type="journal article" date="2002" name="Dev. Cell">
        <title>aph-1 and pen-2 are required for Notch pathway signaling, gamma-secretase cleavage of betaAPP, and presenilin protein accumulation.</title>
        <authorList>
            <person name="Francis R."/>
            <person name="McGrath G."/>
            <person name="Zhang J."/>
            <person name="Ruddy D.A."/>
            <person name="Sym M."/>
            <person name="Apfeld J."/>
            <person name="Nicoll M."/>
            <person name="Maxwell M."/>
            <person name="Hai B."/>
            <person name="Ellis M.C."/>
            <person name="Parks A.L."/>
            <person name="Xu W."/>
            <person name="Li J."/>
            <person name="Gurney M."/>
            <person name="Myers R.L."/>
            <person name="Himes C.S."/>
            <person name="Hiebsch R."/>
            <person name="Ruble C."/>
            <person name="Nye J.S."/>
            <person name="Curtis D."/>
        </authorList>
    </citation>
    <scope>NUCLEOTIDE SEQUENCE [GENOMIC DNA]</scope>
    <scope>FUNCTION</scope>
</reference>
<reference key="3">
    <citation type="journal article" date="1998" name="Science">
        <title>Genome sequence of the nematode C. elegans: a platform for investigating biology.</title>
        <authorList>
            <consortium name="The C. elegans sequencing consortium"/>
        </authorList>
    </citation>
    <scope>NUCLEOTIDE SEQUENCE [LARGE SCALE GENOMIC DNA]</scope>
    <source>
        <strain>Bristol N2</strain>
    </source>
</reference>
<sequence>MGYLLTIACYIASFSPSIALFCSFIAHDPVRIILFFLGSFFWLVSLLFSSLAWLGLSTVLPDTFLLSLTVCIIAQELSRVAYFMLLKKAQRGLNKITRQGQISVAPGVSDLHNARHMLALVCGLGMGVISALFYTMNAFAIFSGPGTIGLPNALKTGEIDTNRAGKYLPLCYTLSAILLTLFHVTWTIMVWDSCHKIGRIPSAFVPGAAAVVSHLLVTFLSSLNSRGFHVLVFAVQFLILLICIAYCNVIMGGTISSFVNGIGQSITDAVTLKQVRTLIEERKLRTQRQSVPDEPMTERAGTSNTVNA</sequence>
<gene>
    <name type="primary">aph-1</name>
    <name type="synonym">pen-1</name>
    <name type="ORF">VF36H2L.1</name>
</gene>
<accession>O45876</accession>
<keyword id="KW-0472">Membrane</keyword>
<keyword id="KW-0914">Notch signaling pathway</keyword>
<keyword id="KW-1185">Reference proteome</keyword>
<keyword id="KW-0812">Transmembrane</keyword>
<keyword id="KW-1133">Transmembrane helix</keyword>
<comment type="function">
    <text evidence="3 4">Essential subunit of the gamma-secretase complex, an endoprotease complex that catalyzes the intramembrane cleavage of integral proteins such as Notch receptors (lin-12 or glp-1). It may represent a stabilizing cofactor for the presenilin homodimer that promotes the formation of a stable complex. Required for the localization of aph-2.</text>
</comment>
<comment type="subunit">
    <text evidence="5">Component of the gamma-secretase complex, a complex probably composed of the presenilin homodimer (sel-12, hop-1 or spe-4), nicastrin (aph-2), aph-1 and pen-2.</text>
</comment>
<comment type="subcellular location">
    <subcellularLocation>
        <location evidence="5">Membrane</location>
        <topology evidence="5">Multi-pass membrane protein</topology>
    </subcellularLocation>
</comment>
<comment type="similarity">
    <text evidence="5">Belongs to the APH-1 family.</text>
</comment>
<protein>
    <recommendedName>
        <fullName>Gamma-secretase subunit aph-1</fullName>
    </recommendedName>
    <alternativeName>
        <fullName>Anterior-pharynx-defective protein 1</fullName>
    </alternativeName>
    <alternativeName>
        <fullName>Presenilin enhancer protein 1</fullName>
    </alternativeName>
</protein>